<protein>
    <recommendedName>
        <fullName evidence="10">SUPPRESSOR OF ABI3-5</fullName>
    </recommendedName>
    <alternativeName>
        <fullName evidence="7">REQUIRED FOR SNC4-1D protein 1</fullName>
    </alternativeName>
    <alternativeName>
        <fullName evidence="8">Splicing factor SUA</fullName>
    </alternativeName>
</protein>
<organism>
    <name type="scientific">Arabidopsis thaliana</name>
    <name type="common">Mouse-ear cress</name>
    <dbReference type="NCBI Taxonomy" id="3702"/>
    <lineage>
        <taxon>Eukaryota</taxon>
        <taxon>Viridiplantae</taxon>
        <taxon>Streptophyta</taxon>
        <taxon>Embryophyta</taxon>
        <taxon>Tracheophyta</taxon>
        <taxon>Spermatophyta</taxon>
        <taxon>Magnoliopsida</taxon>
        <taxon>eudicotyledons</taxon>
        <taxon>Gunneridae</taxon>
        <taxon>Pentapetalae</taxon>
        <taxon>rosids</taxon>
        <taxon>malvids</taxon>
        <taxon>Brassicales</taxon>
        <taxon>Brassicaceae</taxon>
        <taxon>Camelineae</taxon>
        <taxon>Arabidopsis</taxon>
    </lineage>
</organism>
<comment type="function">
    <text evidence="5 6">Splicing factor that controls alternative splicing of the developmental regulator ABI3. Reduces splicing of a cryptic intron in ABI3, leading to a decreased in ABI3-beta transcript (PubMed:20525852). Regulates the splicing of the receptor-like kinase SNC4/LRKL-2.6 (PubMed:25267732).</text>
</comment>
<comment type="subunit">
    <text evidence="5">Interacts with the pre-spliceosomal component U2AF65A.</text>
</comment>
<comment type="interaction">
    <interactant intactId="EBI-4427912">
        <id>F4JCU0</id>
    </interactant>
    <interactant intactId="EBI-4439005">
        <id>O23212</id>
        <label>U2AF65A</label>
    </interactant>
    <organismsDiffer>false</organismsDiffer>
    <experiments>3</experiments>
</comment>
<comment type="subcellular location">
    <subcellularLocation>
        <location evidence="5">Nucleus</location>
    </subcellularLocation>
</comment>
<comment type="alternative products">
    <event type="alternative splicing"/>
    <isoform>
        <id>F4JCU0-1</id>
        <name>1</name>
        <sequence type="displayed"/>
    </isoform>
    <isoform>
        <id>F4JCU0-2</id>
        <name>2</name>
        <sequence type="described" ref="VSP_058194"/>
    </isoform>
</comment>
<comment type="tissue specificity">
    <text evidence="5">Ubiquitous with highest expression in siliques toward the end of seed maturation.</text>
</comment>
<comment type="sequence caution" evidence="8">
    <conflict type="erroneous gene model prediction">
        <sequence resource="EMBL-CDS" id="CAB70997"/>
    </conflict>
</comment>
<evidence type="ECO:0000255" key="1">
    <source>
        <dbReference type="PROSITE-ProRule" id="PRU00092"/>
    </source>
</evidence>
<evidence type="ECO:0000255" key="2">
    <source>
        <dbReference type="PROSITE-ProRule" id="PRU00176"/>
    </source>
</evidence>
<evidence type="ECO:0000255" key="3">
    <source>
        <dbReference type="PROSITE-ProRule" id="PRU00322"/>
    </source>
</evidence>
<evidence type="ECO:0000256" key="4">
    <source>
        <dbReference type="SAM" id="MobiDB-lite"/>
    </source>
</evidence>
<evidence type="ECO:0000269" key="5">
    <source>
    </source>
</evidence>
<evidence type="ECO:0000269" key="6">
    <source>
    </source>
</evidence>
<evidence type="ECO:0000303" key="7">
    <source>
    </source>
</evidence>
<evidence type="ECO:0000305" key="8"/>
<evidence type="ECO:0000312" key="9">
    <source>
        <dbReference type="Araport" id="AT3G54230"/>
    </source>
</evidence>
<evidence type="ECO:0000312" key="10">
    <source>
        <dbReference type="EMBL" id="ADE44117.1"/>
    </source>
</evidence>
<evidence type="ECO:0000312" key="11">
    <source>
        <dbReference type="EMBL" id="CAB70997.1"/>
    </source>
</evidence>
<accession>F4JCU0</accession>
<accession>D5L2Y2</accession>
<accession>Q8VYR8</accession>
<accession>Q9M383</accession>
<feature type="chain" id="PRO_0000435871" description="SUPPRESSOR OF ABI3-5">
    <location>
        <begin position="1"/>
        <end position="1007"/>
    </location>
</feature>
<feature type="domain" description="RRM 1" evidence="2">
    <location>
        <begin position="272"/>
        <end position="352"/>
    </location>
</feature>
<feature type="domain" description="RRM 2" evidence="2">
    <location>
        <begin position="432"/>
        <end position="512"/>
    </location>
</feature>
<feature type="domain" description="G-patch" evidence="1">
    <location>
        <begin position="928"/>
        <end position="974"/>
    </location>
</feature>
<feature type="zinc finger region" description="RanBP2-type" evidence="3">
    <location>
        <begin position="378"/>
        <end position="407"/>
    </location>
</feature>
<feature type="region of interest" description="Disordered" evidence="4">
    <location>
        <begin position="1"/>
        <end position="185"/>
    </location>
</feature>
<feature type="region of interest" description="Disordered" evidence="4">
    <location>
        <begin position="204"/>
        <end position="269"/>
    </location>
</feature>
<feature type="region of interest" description="Disordered" evidence="4">
    <location>
        <begin position="556"/>
        <end position="581"/>
    </location>
</feature>
<feature type="region of interest" description="Disordered" evidence="4">
    <location>
        <begin position="631"/>
        <end position="656"/>
    </location>
</feature>
<feature type="region of interest" description="Disordered" evidence="4">
    <location>
        <begin position="725"/>
        <end position="755"/>
    </location>
</feature>
<feature type="region of interest" description="Disordered" evidence="4">
    <location>
        <begin position="771"/>
        <end position="797"/>
    </location>
</feature>
<feature type="region of interest" description="Disordered" evidence="4">
    <location>
        <begin position="810"/>
        <end position="910"/>
    </location>
</feature>
<feature type="region of interest" description="Disordered" evidence="4">
    <location>
        <begin position="945"/>
        <end position="977"/>
    </location>
</feature>
<feature type="compositionally biased region" description="Basic and acidic residues" evidence="4">
    <location>
        <begin position="40"/>
        <end position="49"/>
    </location>
</feature>
<feature type="compositionally biased region" description="Basic and acidic residues" evidence="4">
    <location>
        <begin position="94"/>
        <end position="120"/>
    </location>
</feature>
<feature type="compositionally biased region" description="Basic and acidic residues" evidence="4">
    <location>
        <begin position="138"/>
        <end position="185"/>
    </location>
</feature>
<feature type="compositionally biased region" description="Basic and acidic residues" evidence="4">
    <location>
        <begin position="204"/>
        <end position="214"/>
    </location>
</feature>
<feature type="compositionally biased region" description="Basic residues" evidence="4">
    <location>
        <begin position="227"/>
        <end position="236"/>
    </location>
</feature>
<feature type="compositionally biased region" description="Basic and acidic residues" evidence="4">
    <location>
        <begin position="237"/>
        <end position="264"/>
    </location>
</feature>
<feature type="compositionally biased region" description="Polar residues" evidence="4">
    <location>
        <begin position="631"/>
        <end position="645"/>
    </location>
</feature>
<feature type="compositionally biased region" description="Low complexity" evidence="4">
    <location>
        <begin position="778"/>
        <end position="793"/>
    </location>
</feature>
<feature type="compositionally biased region" description="Low complexity" evidence="4">
    <location>
        <begin position="823"/>
        <end position="835"/>
    </location>
</feature>
<feature type="compositionally biased region" description="Basic and acidic residues" evidence="4">
    <location>
        <begin position="849"/>
        <end position="867"/>
    </location>
</feature>
<feature type="splice variant" id="VSP_058194" description="In isoform 2.">
    <original>S</original>
    <variation>SS</variation>
    <location>
        <position position="350"/>
    </location>
</feature>
<feature type="sequence conflict" description="In Ref. 1; ADE44117." evidence="8" ref="1">
    <original>N</original>
    <variation>D</variation>
    <location>
        <position position="262"/>
    </location>
</feature>
<feature type="sequence conflict" description="In Ref. 1; ADE44117." evidence="8" ref="1">
    <original>R</original>
    <variation>G</variation>
    <location>
        <position position="495"/>
    </location>
</feature>
<feature type="sequence conflict" description="In Ref. 1; ADE44117." evidence="8" ref="1">
    <original>A</original>
    <variation>S</variation>
    <location>
        <position position="508"/>
    </location>
</feature>
<feature type="sequence conflict" description="In Ref. 1; ADE44117." evidence="8" ref="1">
    <original>L</original>
    <variation>F</variation>
    <location>
        <position position="889"/>
    </location>
</feature>
<feature type="sequence conflict" description="In Ref. 1; ADE44117." evidence="8" ref="1">
    <original>I</original>
    <variation>F</variation>
    <location>
        <position position="920"/>
    </location>
</feature>
<keyword id="KW-0025">Alternative splicing</keyword>
<keyword id="KW-0479">Metal-binding</keyword>
<keyword id="KW-0507">mRNA processing</keyword>
<keyword id="KW-0508">mRNA splicing</keyword>
<keyword id="KW-0539">Nucleus</keyword>
<keyword id="KW-1185">Reference proteome</keyword>
<keyword id="KW-0677">Repeat</keyword>
<keyword id="KW-0694">RNA-binding</keyword>
<keyword id="KW-0747">Spliceosome</keyword>
<keyword id="KW-0862">Zinc</keyword>
<keyword id="KW-0863">Zinc-finger</keyword>
<dbReference type="EMBL" id="GU735482">
    <property type="protein sequence ID" value="ADE44117.1"/>
    <property type="molecule type" value="mRNA"/>
</dbReference>
<dbReference type="EMBL" id="AL132957">
    <property type="protein sequence ID" value="CAB70997.1"/>
    <property type="status" value="ALT_SEQ"/>
    <property type="molecule type" value="Genomic_DNA"/>
</dbReference>
<dbReference type="EMBL" id="CP002686">
    <property type="protein sequence ID" value="AEE79201.1"/>
    <property type="molecule type" value="Genomic_DNA"/>
</dbReference>
<dbReference type="EMBL" id="CP002686">
    <property type="protein sequence ID" value="AEE79202.1"/>
    <property type="molecule type" value="Genomic_DNA"/>
</dbReference>
<dbReference type="EMBL" id="CP002686">
    <property type="protein sequence ID" value="ANM63793.1"/>
    <property type="molecule type" value="Genomic_DNA"/>
</dbReference>
<dbReference type="EMBL" id="AY070066">
    <property type="protein sequence ID" value="AAL49823.1"/>
    <property type="molecule type" value="mRNA"/>
</dbReference>
<dbReference type="EMBL" id="AY096433">
    <property type="protein sequence ID" value="AAM20073.1"/>
    <property type="molecule type" value="mRNA"/>
</dbReference>
<dbReference type="PIR" id="T47582">
    <property type="entry name" value="T47582"/>
</dbReference>
<dbReference type="RefSeq" id="NP_001190084.1">
    <molecule id="F4JCU0-2"/>
    <property type="nucleotide sequence ID" value="NM_001203155.1"/>
</dbReference>
<dbReference type="RefSeq" id="NP_001325864.1">
    <molecule id="F4JCU0-1"/>
    <property type="nucleotide sequence ID" value="NM_001339655.1"/>
</dbReference>
<dbReference type="RefSeq" id="NP_190991.2">
    <molecule id="F4JCU0-1"/>
    <property type="nucleotide sequence ID" value="NM_115283.3"/>
</dbReference>
<dbReference type="FunCoup" id="F4JCU0">
    <property type="interactions" value="4427"/>
</dbReference>
<dbReference type="IntAct" id="F4JCU0">
    <property type="interactions" value="15"/>
</dbReference>
<dbReference type="STRING" id="3702.F4JCU0"/>
<dbReference type="GlyGen" id="F4JCU0">
    <property type="glycosylation" value="2 sites"/>
</dbReference>
<dbReference type="iPTMnet" id="F4JCU0"/>
<dbReference type="PaxDb" id="3702-AT3G54230.2"/>
<dbReference type="ProteomicsDB" id="245226">
    <molecule id="F4JCU0-1"/>
</dbReference>
<dbReference type="EnsemblPlants" id="AT3G54230.1">
    <molecule id="F4JCU0-1"/>
    <property type="protein sequence ID" value="AT3G54230.1"/>
    <property type="gene ID" value="AT3G54230"/>
</dbReference>
<dbReference type="EnsemblPlants" id="AT3G54230.2">
    <molecule id="F4JCU0-2"/>
    <property type="protein sequence ID" value="AT3G54230.2"/>
    <property type="gene ID" value="AT3G54230"/>
</dbReference>
<dbReference type="EnsemblPlants" id="AT3G54230.5">
    <molecule id="F4JCU0-1"/>
    <property type="protein sequence ID" value="AT3G54230.5"/>
    <property type="gene ID" value="AT3G54230"/>
</dbReference>
<dbReference type="GeneID" id="824590"/>
<dbReference type="Gramene" id="AT3G54230.1">
    <molecule id="F4JCU0-1"/>
    <property type="protein sequence ID" value="AT3G54230.1"/>
    <property type="gene ID" value="AT3G54230"/>
</dbReference>
<dbReference type="Gramene" id="AT3G54230.2">
    <molecule id="F4JCU0-2"/>
    <property type="protein sequence ID" value="AT3G54230.2"/>
    <property type="gene ID" value="AT3G54230"/>
</dbReference>
<dbReference type="Gramene" id="AT3G54230.5">
    <molecule id="F4JCU0-1"/>
    <property type="protein sequence ID" value="AT3G54230.5"/>
    <property type="gene ID" value="AT3G54230"/>
</dbReference>
<dbReference type="KEGG" id="ath:AT3G54230"/>
<dbReference type="Araport" id="AT3G54230"/>
<dbReference type="TAIR" id="AT3G54230">
    <property type="gene designation" value="SUA"/>
</dbReference>
<dbReference type="eggNOG" id="KOG0154">
    <property type="taxonomic scope" value="Eukaryota"/>
</dbReference>
<dbReference type="HOGENOM" id="CLU_012277_0_0_1"/>
<dbReference type="InParanoid" id="F4JCU0"/>
<dbReference type="OMA" id="CESEHER"/>
<dbReference type="PhylomeDB" id="F4JCU0"/>
<dbReference type="PRO" id="PR:F4JCU0"/>
<dbReference type="Proteomes" id="UP000006548">
    <property type="component" value="Chromosome 3"/>
</dbReference>
<dbReference type="ExpressionAtlas" id="F4JCU0">
    <property type="expression patterns" value="baseline and differential"/>
</dbReference>
<dbReference type="GO" id="GO:0005634">
    <property type="term" value="C:nucleus"/>
    <property type="evidence" value="ECO:0000314"/>
    <property type="project" value="UniProtKB"/>
</dbReference>
<dbReference type="GO" id="GO:0005681">
    <property type="term" value="C:spliceosomal complex"/>
    <property type="evidence" value="ECO:0007669"/>
    <property type="project" value="UniProtKB-KW"/>
</dbReference>
<dbReference type="GO" id="GO:0003723">
    <property type="term" value="F:RNA binding"/>
    <property type="evidence" value="ECO:0007669"/>
    <property type="project" value="UniProtKB-KW"/>
</dbReference>
<dbReference type="GO" id="GO:0008270">
    <property type="term" value="F:zinc ion binding"/>
    <property type="evidence" value="ECO:0007669"/>
    <property type="project" value="UniProtKB-KW"/>
</dbReference>
<dbReference type="GO" id="GO:0006397">
    <property type="term" value="P:mRNA processing"/>
    <property type="evidence" value="ECO:0000315"/>
    <property type="project" value="UniProtKB"/>
</dbReference>
<dbReference type="GO" id="GO:0000398">
    <property type="term" value="P:mRNA splicing, via spliceosome"/>
    <property type="evidence" value="ECO:0000315"/>
    <property type="project" value="TAIR"/>
</dbReference>
<dbReference type="GO" id="GO:0043484">
    <property type="term" value="P:regulation of RNA splicing"/>
    <property type="evidence" value="ECO:0000315"/>
    <property type="project" value="UniProtKB"/>
</dbReference>
<dbReference type="CDD" id="cd16166">
    <property type="entry name" value="OCRE_SUA_like"/>
    <property type="match status" value="1"/>
</dbReference>
<dbReference type="CDD" id="cd12313">
    <property type="entry name" value="RRM1_RRM2_RBM5_like"/>
    <property type="match status" value="1"/>
</dbReference>
<dbReference type="FunFam" id="3.30.70.330:FF:001571">
    <property type="match status" value="1"/>
</dbReference>
<dbReference type="Gene3D" id="3.30.70.330">
    <property type="match status" value="2"/>
</dbReference>
<dbReference type="Gene3D" id="4.10.1060.10">
    <property type="entry name" value="Zinc finger, RanBP2-type"/>
    <property type="match status" value="1"/>
</dbReference>
<dbReference type="InterPro" id="IPR000467">
    <property type="entry name" value="G_patch_dom"/>
</dbReference>
<dbReference type="InterPro" id="IPR012677">
    <property type="entry name" value="Nucleotide-bd_a/b_plait_sf"/>
</dbReference>
<dbReference type="InterPro" id="IPR041591">
    <property type="entry name" value="OCRE"/>
</dbReference>
<dbReference type="InterPro" id="IPR035979">
    <property type="entry name" value="RBD_domain_sf"/>
</dbReference>
<dbReference type="InterPro" id="IPR000504">
    <property type="entry name" value="RRM_dom"/>
</dbReference>
<dbReference type="InterPro" id="IPR035623">
    <property type="entry name" value="SUA-like_OCRE"/>
</dbReference>
<dbReference type="InterPro" id="IPR001876">
    <property type="entry name" value="Znf_RanBP2"/>
</dbReference>
<dbReference type="InterPro" id="IPR036443">
    <property type="entry name" value="Znf_RanBP2_sf"/>
</dbReference>
<dbReference type="PANTHER" id="PTHR13948:SF3">
    <property type="entry name" value="FI21118P1"/>
    <property type="match status" value="1"/>
</dbReference>
<dbReference type="PANTHER" id="PTHR13948">
    <property type="entry name" value="RNA-BINDING PROTEIN"/>
    <property type="match status" value="1"/>
</dbReference>
<dbReference type="Pfam" id="PF01585">
    <property type="entry name" value="G-patch"/>
    <property type="match status" value="1"/>
</dbReference>
<dbReference type="Pfam" id="PF17780">
    <property type="entry name" value="OCRE"/>
    <property type="match status" value="1"/>
</dbReference>
<dbReference type="Pfam" id="PF00076">
    <property type="entry name" value="RRM_1"/>
    <property type="match status" value="2"/>
</dbReference>
<dbReference type="SMART" id="SM00443">
    <property type="entry name" value="G_patch"/>
    <property type="match status" value="1"/>
</dbReference>
<dbReference type="SMART" id="SM00360">
    <property type="entry name" value="RRM"/>
    <property type="match status" value="2"/>
</dbReference>
<dbReference type="SMART" id="SM00547">
    <property type="entry name" value="ZnF_RBZ"/>
    <property type="match status" value="1"/>
</dbReference>
<dbReference type="SUPFAM" id="SSF90209">
    <property type="entry name" value="Ran binding protein zinc finger-like"/>
    <property type="match status" value="1"/>
</dbReference>
<dbReference type="SUPFAM" id="SSF54928">
    <property type="entry name" value="RNA-binding domain, RBD"/>
    <property type="match status" value="2"/>
</dbReference>
<dbReference type="PROSITE" id="PS50174">
    <property type="entry name" value="G_PATCH"/>
    <property type="match status" value="1"/>
</dbReference>
<dbReference type="PROSITE" id="PS50102">
    <property type="entry name" value="RRM"/>
    <property type="match status" value="2"/>
</dbReference>
<dbReference type="PROSITE" id="PS01358">
    <property type="entry name" value="ZF_RANBP2_1"/>
    <property type="match status" value="1"/>
</dbReference>
<dbReference type="PROSITE" id="PS50199">
    <property type="entry name" value="ZF_RANBP2_2"/>
    <property type="match status" value="1"/>
</dbReference>
<proteinExistence type="evidence at protein level"/>
<reference key="1">
    <citation type="journal article" date="2010" name="Plant Cell">
        <title>The conserved splicing factor SUA controls alternative splicing of the developmental regulator ABI3 in Arabidopsis.</title>
        <authorList>
            <person name="Sugliani M."/>
            <person name="Brambilla V."/>
            <person name="Clerkx E.J."/>
            <person name="Koornneef M."/>
            <person name="Soppe W.J."/>
        </authorList>
    </citation>
    <scope>NUCLEOTIDE SEQUENCE [MRNA] (ISOFORM 1)</scope>
    <scope>IDENTIFICATION</scope>
    <scope>FUNCTION</scope>
    <scope>TISSUE SPECIFICITY</scope>
    <scope>SUBCELLULAR LOCATION</scope>
    <scope>INTERACTION WITH U2AF65A</scope>
    <source>
        <strain>cv. Landsberg erecta</strain>
    </source>
</reference>
<reference key="2">
    <citation type="journal article" date="2000" name="Nature">
        <title>Sequence and analysis of chromosome 3 of the plant Arabidopsis thaliana.</title>
        <authorList>
            <person name="Salanoubat M."/>
            <person name="Lemcke K."/>
            <person name="Rieger M."/>
            <person name="Ansorge W."/>
            <person name="Unseld M."/>
            <person name="Fartmann B."/>
            <person name="Valle G."/>
            <person name="Bloecker H."/>
            <person name="Perez-Alonso M."/>
            <person name="Obermaier B."/>
            <person name="Delseny M."/>
            <person name="Boutry M."/>
            <person name="Grivell L.A."/>
            <person name="Mache R."/>
            <person name="Puigdomenech P."/>
            <person name="De Simone V."/>
            <person name="Choisne N."/>
            <person name="Artiguenave F."/>
            <person name="Robert C."/>
            <person name="Brottier P."/>
            <person name="Wincker P."/>
            <person name="Cattolico L."/>
            <person name="Weissenbach J."/>
            <person name="Saurin W."/>
            <person name="Quetier F."/>
            <person name="Schaefer M."/>
            <person name="Mueller-Auer S."/>
            <person name="Gabel C."/>
            <person name="Fuchs M."/>
            <person name="Benes V."/>
            <person name="Wurmbach E."/>
            <person name="Drzonek H."/>
            <person name="Erfle H."/>
            <person name="Jordan N."/>
            <person name="Bangert S."/>
            <person name="Wiedelmann R."/>
            <person name="Kranz H."/>
            <person name="Voss H."/>
            <person name="Holland R."/>
            <person name="Brandt P."/>
            <person name="Nyakatura G."/>
            <person name="Vezzi A."/>
            <person name="D'Angelo M."/>
            <person name="Pallavicini A."/>
            <person name="Toppo S."/>
            <person name="Simionati B."/>
            <person name="Conrad A."/>
            <person name="Hornischer K."/>
            <person name="Kauer G."/>
            <person name="Loehnert T.-H."/>
            <person name="Nordsiek G."/>
            <person name="Reichelt J."/>
            <person name="Scharfe M."/>
            <person name="Schoen O."/>
            <person name="Bargues M."/>
            <person name="Terol J."/>
            <person name="Climent J."/>
            <person name="Navarro P."/>
            <person name="Collado C."/>
            <person name="Perez-Perez A."/>
            <person name="Ottenwaelder B."/>
            <person name="Duchemin D."/>
            <person name="Cooke R."/>
            <person name="Laudie M."/>
            <person name="Berger-Llauro C."/>
            <person name="Purnelle B."/>
            <person name="Masuy D."/>
            <person name="de Haan M."/>
            <person name="Maarse A.C."/>
            <person name="Alcaraz J.-P."/>
            <person name="Cottet A."/>
            <person name="Casacuberta E."/>
            <person name="Monfort A."/>
            <person name="Argiriou A."/>
            <person name="Flores M."/>
            <person name="Liguori R."/>
            <person name="Vitale D."/>
            <person name="Mannhaupt G."/>
            <person name="Haase D."/>
            <person name="Schoof H."/>
            <person name="Rudd S."/>
            <person name="Zaccaria P."/>
            <person name="Mewes H.-W."/>
            <person name="Mayer K.F.X."/>
            <person name="Kaul S."/>
            <person name="Town C.D."/>
            <person name="Koo H.L."/>
            <person name="Tallon L.J."/>
            <person name="Jenkins J."/>
            <person name="Rooney T."/>
            <person name="Rizzo M."/>
            <person name="Walts A."/>
            <person name="Utterback T."/>
            <person name="Fujii C.Y."/>
            <person name="Shea T.P."/>
            <person name="Creasy T.H."/>
            <person name="Haas B."/>
            <person name="Maiti R."/>
            <person name="Wu D."/>
            <person name="Peterson J."/>
            <person name="Van Aken S."/>
            <person name="Pai G."/>
            <person name="Militscher J."/>
            <person name="Sellers P."/>
            <person name="Gill J.E."/>
            <person name="Feldblyum T.V."/>
            <person name="Preuss D."/>
            <person name="Lin X."/>
            <person name="Nierman W.C."/>
            <person name="Salzberg S.L."/>
            <person name="White O."/>
            <person name="Venter J.C."/>
            <person name="Fraser C.M."/>
            <person name="Kaneko T."/>
            <person name="Nakamura Y."/>
            <person name="Sato S."/>
            <person name="Kato T."/>
            <person name="Asamizu E."/>
            <person name="Sasamoto S."/>
            <person name="Kimura T."/>
            <person name="Idesawa K."/>
            <person name="Kawashima K."/>
            <person name="Kishida Y."/>
            <person name="Kiyokawa C."/>
            <person name="Kohara M."/>
            <person name="Matsumoto M."/>
            <person name="Matsuno A."/>
            <person name="Muraki A."/>
            <person name="Nakayama S."/>
            <person name="Nakazaki N."/>
            <person name="Shinpo S."/>
            <person name="Takeuchi C."/>
            <person name="Wada T."/>
            <person name="Watanabe A."/>
            <person name="Yamada M."/>
            <person name="Yasuda M."/>
            <person name="Tabata S."/>
        </authorList>
    </citation>
    <scope>NUCLEOTIDE SEQUENCE [LARGE SCALE GENOMIC DNA]</scope>
    <source>
        <strain>cv. Columbia</strain>
    </source>
</reference>
<reference key="3">
    <citation type="journal article" date="2017" name="Plant J.">
        <title>Araport11: a complete reannotation of the Arabidopsis thaliana reference genome.</title>
        <authorList>
            <person name="Cheng C.Y."/>
            <person name="Krishnakumar V."/>
            <person name="Chan A.P."/>
            <person name="Thibaud-Nissen F."/>
            <person name="Schobel S."/>
            <person name="Town C.D."/>
        </authorList>
    </citation>
    <scope>GENOME REANNOTATION</scope>
    <source>
        <strain>cv. Columbia</strain>
    </source>
</reference>
<reference key="4">
    <citation type="journal article" date="2003" name="Science">
        <title>Empirical analysis of transcriptional activity in the Arabidopsis genome.</title>
        <authorList>
            <person name="Yamada K."/>
            <person name="Lim J."/>
            <person name="Dale J.M."/>
            <person name="Chen H."/>
            <person name="Shinn P."/>
            <person name="Palm C.J."/>
            <person name="Southwick A.M."/>
            <person name="Wu H.C."/>
            <person name="Kim C.J."/>
            <person name="Nguyen M."/>
            <person name="Pham P.K."/>
            <person name="Cheuk R.F."/>
            <person name="Karlin-Newmann G."/>
            <person name="Liu S.X."/>
            <person name="Lam B."/>
            <person name="Sakano H."/>
            <person name="Wu T."/>
            <person name="Yu G."/>
            <person name="Miranda M."/>
            <person name="Quach H.L."/>
            <person name="Tripp M."/>
            <person name="Chang C.H."/>
            <person name="Lee J.M."/>
            <person name="Toriumi M.J."/>
            <person name="Chan M.M."/>
            <person name="Tang C.C."/>
            <person name="Onodera C.S."/>
            <person name="Deng J.M."/>
            <person name="Akiyama K."/>
            <person name="Ansari Y."/>
            <person name="Arakawa T."/>
            <person name="Banh J."/>
            <person name="Banno F."/>
            <person name="Bowser L."/>
            <person name="Brooks S.Y."/>
            <person name="Carninci P."/>
            <person name="Chao Q."/>
            <person name="Choy N."/>
            <person name="Enju A."/>
            <person name="Goldsmith A.D."/>
            <person name="Gurjal M."/>
            <person name="Hansen N.F."/>
            <person name="Hayashizaki Y."/>
            <person name="Johnson-Hopson C."/>
            <person name="Hsuan V.W."/>
            <person name="Iida K."/>
            <person name="Karnes M."/>
            <person name="Khan S."/>
            <person name="Koesema E."/>
            <person name="Ishida J."/>
            <person name="Jiang P.X."/>
            <person name="Jones T."/>
            <person name="Kawai J."/>
            <person name="Kamiya A."/>
            <person name="Meyers C."/>
            <person name="Nakajima M."/>
            <person name="Narusaka M."/>
            <person name="Seki M."/>
            <person name="Sakurai T."/>
            <person name="Satou M."/>
            <person name="Tamse R."/>
            <person name="Vaysberg M."/>
            <person name="Wallender E.K."/>
            <person name="Wong C."/>
            <person name="Yamamura Y."/>
            <person name="Yuan S."/>
            <person name="Shinozaki K."/>
            <person name="Davis R.W."/>
            <person name="Theologis A."/>
            <person name="Ecker J.R."/>
        </authorList>
    </citation>
    <scope>NUCLEOTIDE SEQUENCE [LARGE SCALE MRNA] (ISOFORM 1)</scope>
    <source>
        <strain>cv. Columbia</strain>
    </source>
</reference>
<reference key="5">
    <citation type="journal article" date="2014" name="Mol. Plant">
        <title>Splicing of receptor-like kinase-encoding SNC4 and CERK1 is regulated by two conserved splicing factors that are required for plant immunity.</title>
        <authorList>
            <person name="Zhang Z."/>
            <person name="Liu Y."/>
            <person name="Ding P."/>
            <person name="Li Y."/>
            <person name="Kong Q."/>
            <person name="Zhang Y."/>
        </authorList>
    </citation>
    <scope>FUNCTION</scope>
</reference>
<gene>
    <name evidence="10" type="primary">SUA</name>
    <name evidence="7" type="synonym">RSN1</name>
    <name evidence="9" type="ordered locus">At3g54230</name>
    <name evidence="11" type="ORF">F24B22.190</name>
</gene>
<sequence>MDPSRYGRQQEWDNNSAPEGYGTQHDPNHRFGVSYDDGYPDERLMRDDVYNYPPGHNTLGDLPQSRKRNYEENYPSELRRQEKPYIDSNYAADYYHDSEAGSRNGHYRDHEHERSSRYDGCDDYSCNDNNYRSKNYHHSRDDGREKDYDYTRRSYDSEYERASVRDGSRKSRDPQDRERNSRDREWDSRDREWDKRCYSRERDESPHKRYEKSRSRSTGRGEFSRSRSPRGRSHGRSYREDSYEGDHWNESERRREYEDRHNQDHFSATPSATVVVKGLSMKSTEEDLYQILAEWGPLHHVRVIREQNSGISRGFAFIDFPTVDAARTMMDRIEHDGIVLDGRKLMFHYSQPTGRAGVSRRQEHASRRSYGGSRNMIVPTDWICTICGCINFARRTSCFQCNEPKTKDSPSADVGLSNSAAGKRISETGPTHVLVVRGLDEDADEEMLRYEFSKHAPIKDLRLVRDKFTHVSRGFAFVHFYSVEDATKALEATNRTALERNGKILRVAYAKSVHGSGTGISAPSHSNNLAAAAIEAATFSQQYDGVGWAPKEYNTGEKQNTGGQAQGVGEIESQKGTSAPQSGYVWDEASGYYYDAASGYYYDGNSGLYYDSNSGLWYSYDQQTQQYVPCPDQNNESKVTENQPDSAKKEKSSQQKVIISAATTPNVEKVLSLPDAVQAAAAAAIASEKREKERVKEIKLASKTSLLASKKKMSNVLTMWKQRSHETQIQRPSPSLGDNPPTVSAEARSSFSTGQSMGKLKSDVIIAKERSTSNHGVSALTTAESSSSSTTGGTLMGVMRGSFGGTLGGASSSASVQMPPILPSASPASVSVSGSGRRRFSETPTAGPTHREQPQTSYRDRAAERRNLYGSSTSSGNDVIDSSEDLMGLRKGSSDPTPFPPGVGGRGITTSTEVSSFDVITEERAIDESNVGNRMLRNMGWHEGSGLGKDGSGMKEPVQAQGVDRRAGLGSQQKKVDAEFEVQPGDTYRTLLHKKALARFRDMSDNN</sequence>
<name>SUA_ARATH</name>